<dbReference type="GO" id="GO:0005576">
    <property type="term" value="C:extracellular region"/>
    <property type="evidence" value="ECO:0007669"/>
    <property type="project" value="UniProtKB-SubCell"/>
</dbReference>
<dbReference type="GO" id="GO:0042742">
    <property type="term" value="P:defense response to bacterium"/>
    <property type="evidence" value="ECO:0007669"/>
    <property type="project" value="UniProtKB-KW"/>
</dbReference>
<dbReference type="GO" id="GO:0031640">
    <property type="term" value="P:killing of cells of another organism"/>
    <property type="evidence" value="ECO:0007669"/>
    <property type="project" value="UniProtKB-KW"/>
</dbReference>
<dbReference type="InterPro" id="IPR022731">
    <property type="entry name" value="Dermaseptin_dom"/>
</dbReference>
<dbReference type="Pfam" id="PF12121">
    <property type="entry name" value="DD_K"/>
    <property type="match status" value="1"/>
</dbReference>
<reference evidence="4" key="1">
    <citation type="submission" date="2006-08" db="UniProtKB">
        <title>Dermaseptins and phylloseptins from Phyllomedusa tarsius (Amphibia).</title>
        <authorList>
            <person name="Prates M.V."/>
            <person name="Jardim D.P."/>
            <person name="Silva L.P."/>
            <person name="Gordo M."/>
            <person name="Leite J.R.S.A."/>
            <person name="Figueredo R.C.R."/>
            <person name="Amaral A.C."/>
            <person name="Felipe M.S.S."/>
            <person name="Bloch C. Jr."/>
        </authorList>
    </citation>
    <scope>PROTEIN SEQUENCE</scope>
    <scope>FUNCTION</scope>
    <scope>SUBCELLULAR LOCATION</scope>
    <scope>TISSUE SPECIFICITY</scope>
    <scope>MASS SPECTROMETRY</scope>
    <scope>AMIDATION AT VAL-25</scope>
    <source>
        <tissue evidence="2">Skin secretion</tissue>
    </source>
</reference>
<sequence>GLWSKIKEAAKTAGKAAMGFVNEMV</sequence>
<protein>
    <recommendedName>
        <fullName evidence="3">Dermaseptin-5</fullName>
        <shortName evidence="3">DStar 05</shortName>
    </recommendedName>
</protein>
<keyword id="KW-0027">Amidation</keyword>
<keyword id="KW-0878">Amphibian defense peptide</keyword>
<keyword id="KW-0044">Antibiotic</keyword>
<keyword id="KW-0929">Antimicrobial</keyword>
<keyword id="KW-0204">Cytolysis</keyword>
<keyword id="KW-0903">Direct protein sequencing</keyword>
<keyword id="KW-0354">Hemolysis</keyword>
<keyword id="KW-0964">Secreted</keyword>
<organism>
    <name type="scientific">Phyllomedusa tarsius</name>
    <name type="common">Brownbelly leaf frog</name>
    <name type="synonym">Phyllomedusa tarsia</name>
    <dbReference type="NCBI Taxonomy" id="306084"/>
    <lineage>
        <taxon>Eukaryota</taxon>
        <taxon>Metazoa</taxon>
        <taxon>Chordata</taxon>
        <taxon>Craniata</taxon>
        <taxon>Vertebrata</taxon>
        <taxon>Euteleostomi</taxon>
        <taxon>Amphibia</taxon>
        <taxon>Batrachia</taxon>
        <taxon>Anura</taxon>
        <taxon>Neobatrachia</taxon>
        <taxon>Hyloidea</taxon>
        <taxon>Hylidae</taxon>
        <taxon>Phyllomedusinae</taxon>
        <taxon>Phyllomedusa</taxon>
    </lineage>
</organism>
<name>DMS5_PHYTS</name>
<comment type="function">
    <text evidence="2">Antimicrobial peptide, active against the Gram-positive bacterium S.aureus, the Gram-negative bacteria E.coli and P.aeruginosa, and the yeasts C.albicans and P.brasiliensis. Has hemolytic activity (15% hemolysis at 128 ug/ml).</text>
</comment>
<comment type="subcellular location">
    <subcellularLocation>
        <location evidence="2">Secreted</location>
    </subcellularLocation>
</comment>
<comment type="tissue specificity">
    <text evidence="2">Expressed by the skin glands.</text>
</comment>
<comment type="mass spectrometry"/>
<comment type="similarity">
    <text evidence="1">Belongs to the frog skin active peptide (FSAP) family. Dermaseptin subfamily.</text>
</comment>
<evidence type="ECO:0000255" key="1"/>
<evidence type="ECO:0000269" key="2">
    <source ref="1"/>
</evidence>
<evidence type="ECO:0000303" key="3">
    <source ref="1"/>
</evidence>
<evidence type="ECO:0000305" key="4"/>
<feature type="peptide" id="PRO_0000376037" description="Dermaseptin-5" evidence="2">
    <location>
        <begin position="1"/>
        <end position="25"/>
    </location>
</feature>
<feature type="modified residue" description="Valine amide" evidence="2">
    <location>
        <position position="25"/>
    </location>
</feature>
<proteinExistence type="evidence at protein level"/>
<accession>P84925</accession>